<keyword id="KW-0067">ATP-binding</keyword>
<keyword id="KW-0143">Chaperone</keyword>
<keyword id="KW-0963">Cytoplasm</keyword>
<keyword id="KW-0547">Nucleotide-binding</keyword>
<keyword id="KW-1185">Reference proteome</keyword>
<feature type="chain" id="PRO_0000160522" description="ATP-dependent protease ATPase subunit HslU">
    <location>
        <begin position="1"/>
        <end position="469"/>
    </location>
</feature>
<feature type="binding site" evidence="1">
    <location>
        <position position="24"/>
    </location>
    <ligand>
        <name>ATP</name>
        <dbReference type="ChEBI" id="CHEBI:30616"/>
    </ligand>
</feature>
<feature type="binding site" evidence="1">
    <location>
        <begin position="66"/>
        <end position="71"/>
    </location>
    <ligand>
        <name>ATP</name>
        <dbReference type="ChEBI" id="CHEBI:30616"/>
    </ligand>
</feature>
<feature type="binding site" evidence="1">
    <location>
        <position position="282"/>
    </location>
    <ligand>
        <name>ATP</name>
        <dbReference type="ChEBI" id="CHEBI:30616"/>
    </ligand>
</feature>
<feature type="binding site" evidence="1">
    <location>
        <position position="347"/>
    </location>
    <ligand>
        <name>ATP</name>
        <dbReference type="ChEBI" id="CHEBI:30616"/>
    </ligand>
</feature>
<feature type="binding site" evidence="1">
    <location>
        <position position="419"/>
    </location>
    <ligand>
        <name>ATP</name>
        <dbReference type="ChEBI" id="CHEBI:30616"/>
    </ligand>
</feature>
<accession>Q8Y7J8</accession>
<comment type="function">
    <text evidence="1">ATPase subunit of a proteasome-like degradation complex; this subunit has chaperone activity. The binding of ATP and its subsequent hydrolysis by HslU are essential for unfolding of protein substrates subsequently hydrolyzed by HslV. HslU recognizes the N-terminal part of its protein substrates and unfolds these before they are guided to HslV for hydrolysis.</text>
</comment>
<comment type="subunit">
    <text evidence="1">A double ring-shaped homohexamer of HslV is capped on each side by a ring-shaped HslU homohexamer. The assembly of the HslU/HslV complex is dependent on binding of ATP.</text>
</comment>
<comment type="subcellular location">
    <subcellularLocation>
        <location evidence="1">Cytoplasm</location>
    </subcellularLocation>
</comment>
<comment type="similarity">
    <text evidence="1">Belongs to the ClpX chaperone family. HslU subfamily.</text>
</comment>
<name>HSLU_LISMO</name>
<dbReference type="EMBL" id="AL591978">
    <property type="protein sequence ID" value="CAC99357.1"/>
    <property type="molecule type" value="Genomic_DNA"/>
</dbReference>
<dbReference type="PIR" id="AG1234">
    <property type="entry name" value="AG1234"/>
</dbReference>
<dbReference type="RefSeq" id="NP_464804.1">
    <property type="nucleotide sequence ID" value="NC_003210.1"/>
</dbReference>
<dbReference type="RefSeq" id="WP_010989722.1">
    <property type="nucleotide sequence ID" value="NZ_CP149495.1"/>
</dbReference>
<dbReference type="SMR" id="Q8Y7J8"/>
<dbReference type="STRING" id="169963.gene:17593936"/>
<dbReference type="PaxDb" id="169963-lmo1279"/>
<dbReference type="EnsemblBacteria" id="CAC99357">
    <property type="protein sequence ID" value="CAC99357"/>
    <property type="gene ID" value="CAC99357"/>
</dbReference>
<dbReference type="GeneID" id="985103"/>
<dbReference type="KEGG" id="lmo:lmo1279"/>
<dbReference type="PATRIC" id="fig|169963.11.peg.1314"/>
<dbReference type="eggNOG" id="COG1220">
    <property type="taxonomic scope" value="Bacteria"/>
</dbReference>
<dbReference type="HOGENOM" id="CLU_033123_0_0_9"/>
<dbReference type="OrthoDB" id="9804062at2"/>
<dbReference type="PhylomeDB" id="Q8Y7J8"/>
<dbReference type="BioCyc" id="LMON169963:LMO1279-MONOMER"/>
<dbReference type="Proteomes" id="UP000000817">
    <property type="component" value="Chromosome"/>
</dbReference>
<dbReference type="GO" id="GO:0009376">
    <property type="term" value="C:HslUV protease complex"/>
    <property type="evidence" value="ECO:0000318"/>
    <property type="project" value="GO_Central"/>
</dbReference>
<dbReference type="GO" id="GO:0005524">
    <property type="term" value="F:ATP binding"/>
    <property type="evidence" value="ECO:0000318"/>
    <property type="project" value="GO_Central"/>
</dbReference>
<dbReference type="GO" id="GO:0016887">
    <property type="term" value="F:ATP hydrolysis activity"/>
    <property type="evidence" value="ECO:0000318"/>
    <property type="project" value="GO_Central"/>
</dbReference>
<dbReference type="GO" id="GO:0008233">
    <property type="term" value="F:peptidase activity"/>
    <property type="evidence" value="ECO:0007669"/>
    <property type="project" value="InterPro"/>
</dbReference>
<dbReference type="GO" id="GO:0036402">
    <property type="term" value="F:proteasome-activating activity"/>
    <property type="evidence" value="ECO:0007669"/>
    <property type="project" value="UniProtKB-UniRule"/>
</dbReference>
<dbReference type="GO" id="GO:0043335">
    <property type="term" value="P:protein unfolding"/>
    <property type="evidence" value="ECO:0007669"/>
    <property type="project" value="UniProtKB-UniRule"/>
</dbReference>
<dbReference type="GO" id="GO:0051603">
    <property type="term" value="P:proteolysis involved in protein catabolic process"/>
    <property type="evidence" value="ECO:0000318"/>
    <property type="project" value="GO_Central"/>
</dbReference>
<dbReference type="CDD" id="cd19498">
    <property type="entry name" value="RecA-like_HslU"/>
    <property type="match status" value="1"/>
</dbReference>
<dbReference type="Gene3D" id="1.10.8.60">
    <property type="match status" value="1"/>
</dbReference>
<dbReference type="Gene3D" id="1.10.8.10">
    <property type="entry name" value="DNA helicase RuvA subunit, C-terminal domain"/>
    <property type="match status" value="1"/>
</dbReference>
<dbReference type="Gene3D" id="3.40.50.300">
    <property type="entry name" value="P-loop containing nucleotide triphosphate hydrolases"/>
    <property type="match status" value="2"/>
</dbReference>
<dbReference type="HAMAP" id="MF_00249">
    <property type="entry name" value="HslU"/>
    <property type="match status" value="1"/>
</dbReference>
<dbReference type="InterPro" id="IPR003593">
    <property type="entry name" value="AAA+_ATPase"/>
</dbReference>
<dbReference type="InterPro" id="IPR050052">
    <property type="entry name" value="ATP-dep_Clp_protease_ClpX"/>
</dbReference>
<dbReference type="InterPro" id="IPR003959">
    <property type="entry name" value="ATPase_AAA_core"/>
</dbReference>
<dbReference type="InterPro" id="IPR019489">
    <property type="entry name" value="Clp_ATPase_C"/>
</dbReference>
<dbReference type="InterPro" id="IPR004491">
    <property type="entry name" value="HslU"/>
</dbReference>
<dbReference type="InterPro" id="IPR027417">
    <property type="entry name" value="P-loop_NTPase"/>
</dbReference>
<dbReference type="NCBIfam" id="TIGR00390">
    <property type="entry name" value="hslU"/>
    <property type="match status" value="1"/>
</dbReference>
<dbReference type="NCBIfam" id="NF003544">
    <property type="entry name" value="PRK05201.1"/>
    <property type="match status" value="1"/>
</dbReference>
<dbReference type="PANTHER" id="PTHR48102">
    <property type="entry name" value="ATP-DEPENDENT CLP PROTEASE ATP-BINDING SUBUNIT CLPX-LIKE, MITOCHONDRIAL-RELATED"/>
    <property type="match status" value="1"/>
</dbReference>
<dbReference type="PANTHER" id="PTHR48102:SF3">
    <property type="entry name" value="ATP-DEPENDENT PROTEASE ATPASE SUBUNIT HSLU"/>
    <property type="match status" value="1"/>
</dbReference>
<dbReference type="Pfam" id="PF00004">
    <property type="entry name" value="AAA"/>
    <property type="match status" value="1"/>
</dbReference>
<dbReference type="Pfam" id="PF07724">
    <property type="entry name" value="AAA_2"/>
    <property type="match status" value="1"/>
</dbReference>
<dbReference type="Pfam" id="PF10431">
    <property type="entry name" value="ClpB_D2-small"/>
    <property type="match status" value="1"/>
</dbReference>
<dbReference type="SMART" id="SM00382">
    <property type="entry name" value="AAA"/>
    <property type="match status" value="1"/>
</dbReference>
<dbReference type="SMART" id="SM01086">
    <property type="entry name" value="ClpB_D2-small"/>
    <property type="match status" value="1"/>
</dbReference>
<dbReference type="SUPFAM" id="SSF52540">
    <property type="entry name" value="P-loop containing nucleoside triphosphate hydrolases"/>
    <property type="match status" value="1"/>
</dbReference>
<gene>
    <name evidence="1" type="primary">hslU</name>
    <name type="synonym">clpY</name>
    <name type="ordered locus">lmo1279</name>
</gene>
<sequence length="469" mass="53226">MTNLTLRNQLTPKQIVEKLDQYIIGQNGAKKSVAVALRNRYRRQLMDESIRDEIIPKNILMIGPTGVGKTEIARRIAKIVRAPFSKVEATKFTEVGYVGRDVESMVRDLVEVSVRLVKEEKMQLVRVKAEKNAEKRLIKLLAPSQKKKQTTSQNPLEALFGGMNQPDESPEEEVDQELKNKRSQIEWRLQNGELDDEIVTVEVKEQQNPMLDMMRGAGMDQMNGMQDALSGMFPAKKKKRKVTVREAKKILFEDEASKLIDADELAAEGIHRAEQMGMIFIDEIDKIASKEGGGNAQVSREGVQRDILPIVEGSQISTKYGTVNTEYILFIAAGAFHMSKPSDLIPELQGRFPIRIELDKLTQEDFYKILTEPDNALIKQYKALLKTEGIDLIFTKEAVERIAEIAFQVNQDSDNIGARRLHTILEKLLEDLLFEAPEINMESIKVTENYVNEKLAPIMQNKDLTQFIL</sequence>
<reference key="1">
    <citation type="journal article" date="2001" name="Science">
        <title>Comparative genomics of Listeria species.</title>
        <authorList>
            <person name="Glaser P."/>
            <person name="Frangeul L."/>
            <person name="Buchrieser C."/>
            <person name="Rusniok C."/>
            <person name="Amend A."/>
            <person name="Baquero F."/>
            <person name="Berche P."/>
            <person name="Bloecker H."/>
            <person name="Brandt P."/>
            <person name="Chakraborty T."/>
            <person name="Charbit A."/>
            <person name="Chetouani F."/>
            <person name="Couve E."/>
            <person name="de Daruvar A."/>
            <person name="Dehoux P."/>
            <person name="Domann E."/>
            <person name="Dominguez-Bernal G."/>
            <person name="Duchaud E."/>
            <person name="Durant L."/>
            <person name="Dussurget O."/>
            <person name="Entian K.-D."/>
            <person name="Fsihi H."/>
            <person name="Garcia-del Portillo F."/>
            <person name="Garrido P."/>
            <person name="Gautier L."/>
            <person name="Goebel W."/>
            <person name="Gomez-Lopez N."/>
            <person name="Hain T."/>
            <person name="Hauf J."/>
            <person name="Jackson D."/>
            <person name="Jones L.-M."/>
            <person name="Kaerst U."/>
            <person name="Kreft J."/>
            <person name="Kuhn M."/>
            <person name="Kunst F."/>
            <person name="Kurapkat G."/>
            <person name="Madueno E."/>
            <person name="Maitournam A."/>
            <person name="Mata Vicente J."/>
            <person name="Ng E."/>
            <person name="Nedjari H."/>
            <person name="Nordsiek G."/>
            <person name="Novella S."/>
            <person name="de Pablos B."/>
            <person name="Perez-Diaz J.-C."/>
            <person name="Purcell R."/>
            <person name="Remmel B."/>
            <person name="Rose M."/>
            <person name="Schlueter T."/>
            <person name="Simoes N."/>
            <person name="Tierrez A."/>
            <person name="Vazquez-Boland J.-A."/>
            <person name="Voss H."/>
            <person name="Wehland J."/>
            <person name="Cossart P."/>
        </authorList>
    </citation>
    <scope>NUCLEOTIDE SEQUENCE [LARGE SCALE GENOMIC DNA]</scope>
    <source>
        <strain>ATCC BAA-679 / EGD-e</strain>
    </source>
</reference>
<organism>
    <name type="scientific">Listeria monocytogenes serovar 1/2a (strain ATCC BAA-679 / EGD-e)</name>
    <dbReference type="NCBI Taxonomy" id="169963"/>
    <lineage>
        <taxon>Bacteria</taxon>
        <taxon>Bacillati</taxon>
        <taxon>Bacillota</taxon>
        <taxon>Bacilli</taxon>
        <taxon>Bacillales</taxon>
        <taxon>Listeriaceae</taxon>
        <taxon>Listeria</taxon>
    </lineage>
</organism>
<protein>
    <recommendedName>
        <fullName evidence="1">ATP-dependent protease ATPase subunit HslU</fullName>
    </recommendedName>
    <alternativeName>
        <fullName evidence="1">Unfoldase HslU</fullName>
    </alternativeName>
</protein>
<evidence type="ECO:0000255" key="1">
    <source>
        <dbReference type="HAMAP-Rule" id="MF_00249"/>
    </source>
</evidence>
<proteinExistence type="inferred from homology"/>